<proteinExistence type="inferred from homology"/>
<sequence length="559" mass="61864">MKQLHANEVGVYALGGLGEVGKNTYAIEYKNEIVIIDAGIKFPDDNLLGIDYVIPDYTYLEQNQDKIVGLFITHGHEDHIGGVPYLLKQINVPIYGGPLALGLIRNKLDEHNLLRNASLNEITEDSVIKSKHFEISFYLTTHSIPEAYGVIIDTPEGKIVHTGDFKFDFTPVGEPANIAKMAELGKEGVLCLLSDSTNALVPDFTLSEREVGQNVDKIFRNCKGRIIFATFASNIYRVQQAVEAAIKYNRKIVTFGRSMENNIKIGMELGYIKAPPETFVEPNKINNIPKHELLILCTGSQGEPMAALSRIANGTHKQIKIIPDDTVVFSSSPIPGNTKSINRTINALYKAGADVIHSKISNIHTSGHGSQGDQQLMLRLIQPKYFLPIHGEYRMLKAHGQTGVDCGVKEENVFIFDIGDVLALTHDSARKAGRIPSGNVLVDGSGIGDIGNVVIRDRKLLSEEGLVIVVVSIDFNTNKLLSGPDIISRGFVYMRESGQLIYDAQRKIKTDVISKLNANPNIQWHQIKSSIIETLQPYLYDKTARRPMILPVIMKVNED</sequence>
<accession>Q4L5A3</accession>
<organism>
    <name type="scientific">Staphylococcus haemolyticus (strain JCSC1435)</name>
    <dbReference type="NCBI Taxonomy" id="279808"/>
    <lineage>
        <taxon>Bacteria</taxon>
        <taxon>Bacillati</taxon>
        <taxon>Bacillota</taxon>
        <taxon>Bacilli</taxon>
        <taxon>Bacillales</taxon>
        <taxon>Staphylococcaceae</taxon>
        <taxon>Staphylococcus</taxon>
    </lineage>
</organism>
<feature type="chain" id="PRO_0000286857" description="Ribonuclease J 1">
    <location>
        <begin position="1"/>
        <end position="559"/>
    </location>
</feature>
<feature type="binding site" evidence="2">
    <location>
        <position position="74"/>
    </location>
    <ligand>
        <name>Zn(2+)</name>
        <dbReference type="ChEBI" id="CHEBI:29105"/>
        <label>1</label>
        <note>catalytic</note>
    </ligand>
</feature>
<feature type="binding site" evidence="2">
    <location>
        <position position="76"/>
    </location>
    <ligand>
        <name>Zn(2+)</name>
        <dbReference type="ChEBI" id="CHEBI:29105"/>
        <label>1</label>
        <note>catalytic</note>
    </ligand>
</feature>
<feature type="binding site" evidence="2">
    <location>
        <position position="78"/>
    </location>
    <ligand>
        <name>Zn(2+)</name>
        <dbReference type="ChEBI" id="CHEBI:29105"/>
        <label>2</label>
        <note>catalytic</note>
    </ligand>
</feature>
<feature type="binding site" evidence="2">
    <location>
        <position position="79"/>
    </location>
    <ligand>
        <name>Zn(2+)</name>
        <dbReference type="ChEBI" id="CHEBI:29105"/>
        <label>2</label>
        <note>catalytic</note>
    </ligand>
</feature>
<feature type="binding site" evidence="2">
    <location>
        <position position="142"/>
    </location>
    <ligand>
        <name>Zn(2+)</name>
        <dbReference type="ChEBI" id="CHEBI:29105"/>
        <label>1</label>
        <note>catalytic</note>
    </ligand>
</feature>
<feature type="binding site" evidence="2">
    <location>
        <position position="164"/>
    </location>
    <ligand>
        <name>Zn(2+)</name>
        <dbReference type="ChEBI" id="CHEBI:29105"/>
        <label>1</label>
        <note>catalytic</note>
    </ligand>
</feature>
<feature type="binding site" evidence="2">
    <location>
        <position position="164"/>
    </location>
    <ligand>
        <name>Zn(2+)</name>
        <dbReference type="ChEBI" id="CHEBI:29105"/>
        <label>2</label>
        <note>catalytic</note>
    </ligand>
</feature>
<feature type="binding site" evidence="2">
    <location>
        <begin position="364"/>
        <end position="368"/>
    </location>
    <ligand>
        <name>substrate</name>
    </ligand>
</feature>
<feature type="binding site" evidence="2">
    <location>
        <position position="390"/>
    </location>
    <ligand>
        <name>Zn(2+)</name>
        <dbReference type="ChEBI" id="CHEBI:29105"/>
        <label>2</label>
        <note>catalytic</note>
    </ligand>
</feature>
<keyword id="KW-0963">Cytoplasm</keyword>
<keyword id="KW-0255">Endonuclease</keyword>
<keyword id="KW-0269">Exonuclease</keyword>
<keyword id="KW-0378">Hydrolase</keyword>
<keyword id="KW-0479">Metal-binding</keyword>
<keyword id="KW-0540">Nuclease</keyword>
<keyword id="KW-0694">RNA-binding</keyword>
<keyword id="KW-0698">rRNA processing</keyword>
<keyword id="KW-0862">Zinc</keyword>
<gene>
    <name evidence="2" type="primary">rnj1</name>
    <name type="ordered locus">SH1863</name>
</gene>
<name>RNJ1_STAHJ</name>
<protein>
    <recommendedName>
        <fullName evidence="2">Ribonuclease J 1</fullName>
        <shortName evidence="2">RNase J1</shortName>
        <ecNumber evidence="2">3.1.-.-</ecNumber>
    </recommendedName>
</protein>
<dbReference type="EC" id="3.1.-.-" evidence="2"/>
<dbReference type="EMBL" id="AP006716">
    <property type="protein sequence ID" value="BAE05172.1"/>
    <property type="molecule type" value="Genomic_DNA"/>
</dbReference>
<dbReference type="SMR" id="Q4L5A3"/>
<dbReference type="KEGG" id="sha:SH1863"/>
<dbReference type="eggNOG" id="COG0595">
    <property type="taxonomic scope" value="Bacteria"/>
</dbReference>
<dbReference type="HOGENOM" id="CLU_008727_3_1_9"/>
<dbReference type="OrthoDB" id="9758375at2"/>
<dbReference type="Proteomes" id="UP000000543">
    <property type="component" value="Chromosome"/>
</dbReference>
<dbReference type="GO" id="GO:0005737">
    <property type="term" value="C:cytoplasm"/>
    <property type="evidence" value="ECO:0007669"/>
    <property type="project" value="UniProtKB-SubCell"/>
</dbReference>
<dbReference type="GO" id="GO:0004534">
    <property type="term" value="F:5'-3' RNA exonuclease activity"/>
    <property type="evidence" value="ECO:0007669"/>
    <property type="project" value="UniProtKB-UniRule"/>
</dbReference>
<dbReference type="GO" id="GO:0003723">
    <property type="term" value="F:RNA binding"/>
    <property type="evidence" value="ECO:0007669"/>
    <property type="project" value="UniProtKB-UniRule"/>
</dbReference>
<dbReference type="GO" id="GO:0004521">
    <property type="term" value="F:RNA endonuclease activity"/>
    <property type="evidence" value="ECO:0007669"/>
    <property type="project" value="UniProtKB-UniRule"/>
</dbReference>
<dbReference type="GO" id="GO:0008270">
    <property type="term" value="F:zinc ion binding"/>
    <property type="evidence" value="ECO:0007669"/>
    <property type="project" value="InterPro"/>
</dbReference>
<dbReference type="GO" id="GO:0006364">
    <property type="term" value="P:rRNA processing"/>
    <property type="evidence" value="ECO:0007669"/>
    <property type="project" value="UniProtKB-UniRule"/>
</dbReference>
<dbReference type="CDD" id="cd07714">
    <property type="entry name" value="RNaseJ_MBL-fold"/>
    <property type="match status" value="1"/>
</dbReference>
<dbReference type="FunFam" id="3.10.20.580:FF:000001">
    <property type="entry name" value="Ribonuclease J"/>
    <property type="match status" value="1"/>
</dbReference>
<dbReference type="Gene3D" id="3.10.20.580">
    <property type="match status" value="1"/>
</dbReference>
<dbReference type="Gene3D" id="3.40.50.10710">
    <property type="entry name" value="Metallo-hydrolase/oxidoreductase"/>
    <property type="match status" value="1"/>
</dbReference>
<dbReference type="Gene3D" id="3.60.15.10">
    <property type="entry name" value="Ribonuclease Z/Hydroxyacylglutathione hydrolase-like"/>
    <property type="match status" value="1"/>
</dbReference>
<dbReference type="HAMAP" id="MF_01491">
    <property type="entry name" value="RNase_J_bact"/>
    <property type="match status" value="1"/>
</dbReference>
<dbReference type="InterPro" id="IPR001279">
    <property type="entry name" value="Metallo-B-lactamas"/>
</dbReference>
<dbReference type="InterPro" id="IPR036866">
    <property type="entry name" value="RibonucZ/Hydroxyglut_hydro"/>
</dbReference>
<dbReference type="InterPro" id="IPR011108">
    <property type="entry name" value="RMMBL"/>
</dbReference>
<dbReference type="InterPro" id="IPR004613">
    <property type="entry name" value="RNase_J"/>
</dbReference>
<dbReference type="InterPro" id="IPR042173">
    <property type="entry name" value="RNase_J_2"/>
</dbReference>
<dbReference type="InterPro" id="IPR055132">
    <property type="entry name" value="RNase_J_b_CASP"/>
</dbReference>
<dbReference type="InterPro" id="IPR030854">
    <property type="entry name" value="RNase_J_bac"/>
</dbReference>
<dbReference type="InterPro" id="IPR041636">
    <property type="entry name" value="RNase_J_C"/>
</dbReference>
<dbReference type="InterPro" id="IPR001587">
    <property type="entry name" value="RNase_J_CS"/>
</dbReference>
<dbReference type="NCBIfam" id="TIGR00649">
    <property type="entry name" value="MG423"/>
    <property type="match status" value="1"/>
</dbReference>
<dbReference type="NCBIfam" id="NF047419">
    <property type="entry name" value="RNase_J1_RnjA"/>
    <property type="match status" value="1"/>
</dbReference>
<dbReference type="PANTHER" id="PTHR43694">
    <property type="entry name" value="RIBONUCLEASE J"/>
    <property type="match status" value="1"/>
</dbReference>
<dbReference type="PANTHER" id="PTHR43694:SF1">
    <property type="entry name" value="RIBONUCLEASE J"/>
    <property type="match status" value="1"/>
</dbReference>
<dbReference type="Pfam" id="PF00753">
    <property type="entry name" value="Lactamase_B"/>
    <property type="match status" value="1"/>
</dbReference>
<dbReference type="Pfam" id="PF07521">
    <property type="entry name" value="RMMBL"/>
    <property type="match status" value="1"/>
</dbReference>
<dbReference type="Pfam" id="PF22505">
    <property type="entry name" value="RNase_J_b_CASP"/>
    <property type="match status" value="1"/>
</dbReference>
<dbReference type="Pfam" id="PF17770">
    <property type="entry name" value="RNase_J_C"/>
    <property type="match status" value="1"/>
</dbReference>
<dbReference type="PIRSF" id="PIRSF004803">
    <property type="entry name" value="RnjA"/>
    <property type="match status" value="1"/>
</dbReference>
<dbReference type="SMART" id="SM00849">
    <property type="entry name" value="Lactamase_B"/>
    <property type="match status" value="1"/>
</dbReference>
<dbReference type="SUPFAM" id="SSF56281">
    <property type="entry name" value="Metallo-hydrolase/oxidoreductase"/>
    <property type="match status" value="1"/>
</dbReference>
<dbReference type="PROSITE" id="PS01292">
    <property type="entry name" value="UPF0036"/>
    <property type="match status" value="1"/>
</dbReference>
<reference key="1">
    <citation type="journal article" date="2005" name="J. Bacteriol.">
        <title>Whole-genome sequencing of Staphylococcus haemolyticus uncovers the extreme plasticity of its genome and the evolution of human-colonizing staphylococcal species.</title>
        <authorList>
            <person name="Takeuchi F."/>
            <person name="Watanabe S."/>
            <person name="Baba T."/>
            <person name="Yuzawa H."/>
            <person name="Ito T."/>
            <person name="Morimoto Y."/>
            <person name="Kuroda M."/>
            <person name="Cui L."/>
            <person name="Takahashi M."/>
            <person name="Ankai A."/>
            <person name="Baba S."/>
            <person name="Fukui S."/>
            <person name="Lee J.C."/>
            <person name="Hiramatsu K."/>
        </authorList>
    </citation>
    <scope>NUCLEOTIDE SEQUENCE [LARGE SCALE GENOMIC DNA]</scope>
    <source>
        <strain>JCSC1435</strain>
    </source>
</reference>
<evidence type="ECO:0000250" key="1"/>
<evidence type="ECO:0000255" key="2">
    <source>
        <dbReference type="HAMAP-Rule" id="MF_01491"/>
    </source>
</evidence>
<comment type="function">
    <text evidence="1">An RNase that has 5'-3' exonuclease and possibly endoonuclease activity. Involved in maturation of rRNA and in some organisms also mRNA maturation and/or decay (By similarity).</text>
</comment>
<comment type="cofactor">
    <cofactor evidence="2">
        <name>Zn(2+)</name>
        <dbReference type="ChEBI" id="CHEBI:29105"/>
    </cofactor>
    <text evidence="2">Binds up to 2 Zn(2+) ions per subunit. It is not clear if Zn(2+) or Mg(2+) is physiologically important.</text>
</comment>
<comment type="subunit">
    <text evidence="2">Homodimer, may be a subunit of the RNA degradosome.</text>
</comment>
<comment type="subcellular location">
    <subcellularLocation>
        <location evidence="2">Cytoplasm</location>
    </subcellularLocation>
</comment>
<comment type="similarity">
    <text evidence="2">Belongs to the metallo-beta-lactamase superfamily. RNA-metabolizing metallo-beta-lactamase-like family. Bacterial RNase J subfamily.</text>
</comment>